<sequence length="248" mass="27313">MIEYRIEEAVAKYREFYEFKPVRESAGIEDVRSAIEHTNLKPFATPDDIKKLCLEARENRFHGVCVNPCYVKLAREELEGTDVKVVTVVGFPLGANETRTKAHEAIFAVESGADEIDMVINVGMLKAKEWEYVYEDIRSVVESVKGKVVKVIIETCYLDTEEKIAACVISKLAGAHFVKTSTGFGTGGATAEDVHLMKWIVGDEMGVKASGGIRTFEDAVKMIMYGADRIGTSSGVKIVQGGEERYGG</sequence>
<evidence type="ECO:0000255" key="1">
    <source>
        <dbReference type="HAMAP-Rule" id="MF_00114"/>
    </source>
</evidence>
<gene>
    <name evidence="1" type="primary">deoC</name>
    <name type="ordered locus">TRQ2_1222</name>
</gene>
<accession>B1LB68</accession>
<name>DEOC_THESQ</name>
<dbReference type="EC" id="4.1.2.4" evidence="1"/>
<dbReference type="EMBL" id="CP000969">
    <property type="protein sequence ID" value="ACB09566.1"/>
    <property type="molecule type" value="Genomic_DNA"/>
</dbReference>
<dbReference type="RefSeq" id="WP_012311016.1">
    <property type="nucleotide sequence ID" value="NC_010483.1"/>
</dbReference>
<dbReference type="SMR" id="B1LB68"/>
<dbReference type="KEGG" id="trq:TRQ2_1222"/>
<dbReference type="HOGENOM" id="CLU_053595_0_1_0"/>
<dbReference type="UniPathway" id="UPA00002">
    <property type="reaction ID" value="UER00468"/>
</dbReference>
<dbReference type="Proteomes" id="UP000001687">
    <property type="component" value="Chromosome"/>
</dbReference>
<dbReference type="GO" id="GO:0005737">
    <property type="term" value="C:cytoplasm"/>
    <property type="evidence" value="ECO:0007669"/>
    <property type="project" value="UniProtKB-SubCell"/>
</dbReference>
<dbReference type="GO" id="GO:0004139">
    <property type="term" value="F:deoxyribose-phosphate aldolase activity"/>
    <property type="evidence" value="ECO:0007669"/>
    <property type="project" value="UniProtKB-UniRule"/>
</dbReference>
<dbReference type="GO" id="GO:0006018">
    <property type="term" value="P:2-deoxyribose 1-phosphate catabolic process"/>
    <property type="evidence" value="ECO:0007669"/>
    <property type="project" value="UniProtKB-UniRule"/>
</dbReference>
<dbReference type="GO" id="GO:0016052">
    <property type="term" value="P:carbohydrate catabolic process"/>
    <property type="evidence" value="ECO:0007669"/>
    <property type="project" value="TreeGrafter"/>
</dbReference>
<dbReference type="GO" id="GO:0009264">
    <property type="term" value="P:deoxyribonucleotide catabolic process"/>
    <property type="evidence" value="ECO:0007669"/>
    <property type="project" value="InterPro"/>
</dbReference>
<dbReference type="CDD" id="cd00959">
    <property type="entry name" value="DeoC"/>
    <property type="match status" value="1"/>
</dbReference>
<dbReference type="FunFam" id="3.20.20.70:FF:000198">
    <property type="entry name" value="Deoxyribose-phosphate aldolase"/>
    <property type="match status" value="1"/>
</dbReference>
<dbReference type="Gene3D" id="3.20.20.70">
    <property type="entry name" value="Aldolase class I"/>
    <property type="match status" value="1"/>
</dbReference>
<dbReference type="HAMAP" id="MF_00114">
    <property type="entry name" value="DeoC_type1"/>
    <property type="match status" value="1"/>
</dbReference>
<dbReference type="InterPro" id="IPR013785">
    <property type="entry name" value="Aldolase_TIM"/>
</dbReference>
<dbReference type="InterPro" id="IPR011343">
    <property type="entry name" value="DeoC"/>
</dbReference>
<dbReference type="InterPro" id="IPR002915">
    <property type="entry name" value="DeoC/FbaB/LacD_aldolase"/>
</dbReference>
<dbReference type="InterPro" id="IPR028581">
    <property type="entry name" value="DeoC_typeI"/>
</dbReference>
<dbReference type="NCBIfam" id="TIGR00126">
    <property type="entry name" value="deoC"/>
    <property type="match status" value="1"/>
</dbReference>
<dbReference type="PANTHER" id="PTHR10889">
    <property type="entry name" value="DEOXYRIBOSE-PHOSPHATE ALDOLASE"/>
    <property type="match status" value="1"/>
</dbReference>
<dbReference type="PANTHER" id="PTHR10889:SF1">
    <property type="entry name" value="DEOXYRIBOSE-PHOSPHATE ALDOLASE"/>
    <property type="match status" value="1"/>
</dbReference>
<dbReference type="Pfam" id="PF01791">
    <property type="entry name" value="DeoC"/>
    <property type="match status" value="1"/>
</dbReference>
<dbReference type="PIRSF" id="PIRSF001357">
    <property type="entry name" value="DeoC"/>
    <property type="match status" value="1"/>
</dbReference>
<dbReference type="SMART" id="SM01133">
    <property type="entry name" value="DeoC"/>
    <property type="match status" value="1"/>
</dbReference>
<dbReference type="SUPFAM" id="SSF51569">
    <property type="entry name" value="Aldolase"/>
    <property type="match status" value="1"/>
</dbReference>
<feature type="chain" id="PRO_1000094864" description="Deoxyribose-phosphate aldolase">
    <location>
        <begin position="1"/>
        <end position="248"/>
    </location>
</feature>
<feature type="active site" description="Proton donor/acceptor" evidence="1">
    <location>
        <position position="117"/>
    </location>
</feature>
<feature type="active site" description="Schiff-base intermediate with acetaldehyde" evidence="1">
    <location>
        <position position="179"/>
    </location>
</feature>
<feature type="active site" description="Proton donor/acceptor" evidence="1">
    <location>
        <position position="208"/>
    </location>
</feature>
<comment type="function">
    <text evidence="1">Catalyzes a reversible aldol reaction between acetaldehyde and D-glyceraldehyde 3-phosphate to generate 2-deoxy-D-ribose 5-phosphate.</text>
</comment>
<comment type="catalytic activity">
    <reaction evidence="1">
        <text>2-deoxy-D-ribose 5-phosphate = D-glyceraldehyde 3-phosphate + acetaldehyde</text>
        <dbReference type="Rhea" id="RHEA:12821"/>
        <dbReference type="ChEBI" id="CHEBI:15343"/>
        <dbReference type="ChEBI" id="CHEBI:59776"/>
        <dbReference type="ChEBI" id="CHEBI:62877"/>
        <dbReference type="EC" id="4.1.2.4"/>
    </reaction>
</comment>
<comment type="pathway">
    <text evidence="1">Carbohydrate degradation; 2-deoxy-D-ribose 1-phosphate degradation; D-glyceraldehyde 3-phosphate and acetaldehyde from 2-deoxy-alpha-D-ribose 1-phosphate: step 2/2.</text>
</comment>
<comment type="subcellular location">
    <subcellularLocation>
        <location evidence="1">Cytoplasm</location>
    </subcellularLocation>
</comment>
<comment type="similarity">
    <text evidence="1">Belongs to the DeoC/FbaB aldolase family. DeoC type 1 subfamily.</text>
</comment>
<proteinExistence type="inferred from homology"/>
<protein>
    <recommendedName>
        <fullName evidence="1">Deoxyribose-phosphate aldolase</fullName>
        <shortName evidence="1">DERA</shortName>
        <ecNumber evidence="1">4.1.2.4</ecNumber>
    </recommendedName>
    <alternativeName>
        <fullName evidence="1">2-deoxy-D-ribose 5-phosphate aldolase</fullName>
    </alternativeName>
    <alternativeName>
        <fullName evidence="1">Phosphodeoxyriboaldolase</fullName>
        <shortName evidence="1">Deoxyriboaldolase</shortName>
    </alternativeName>
</protein>
<keyword id="KW-0963">Cytoplasm</keyword>
<keyword id="KW-0456">Lyase</keyword>
<keyword id="KW-0704">Schiff base</keyword>
<organism>
    <name type="scientific">Thermotoga sp. (strain RQ2)</name>
    <dbReference type="NCBI Taxonomy" id="126740"/>
    <lineage>
        <taxon>Bacteria</taxon>
        <taxon>Thermotogati</taxon>
        <taxon>Thermotogota</taxon>
        <taxon>Thermotogae</taxon>
        <taxon>Thermotogales</taxon>
        <taxon>Thermotogaceae</taxon>
        <taxon>Thermotoga</taxon>
    </lineage>
</organism>
<reference key="1">
    <citation type="journal article" date="2011" name="J. Bacteriol.">
        <title>Genome sequence of Thermotoga sp. strain RQ2, a hyperthermophilic bacterium isolated from a geothermally heated region of the seafloor near Ribeira Quente, the Azores.</title>
        <authorList>
            <person name="Swithers K.S."/>
            <person name="DiPippo J.L."/>
            <person name="Bruce D.C."/>
            <person name="Detter C."/>
            <person name="Tapia R."/>
            <person name="Han S."/>
            <person name="Saunders E."/>
            <person name="Goodwin L.A."/>
            <person name="Han J."/>
            <person name="Woyke T."/>
            <person name="Pitluck S."/>
            <person name="Pennacchio L."/>
            <person name="Nolan M."/>
            <person name="Mikhailova N."/>
            <person name="Lykidis A."/>
            <person name="Land M.L."/>
            <person name="Brettin T."/>
            <person name="Stetter K.O."/>
            <person name="Nelson K.E."/>
            <person name="Gogarten J.P."/>
            <person name="Noll K.M."/>
        </authorList>
    </citation>
    <scope>NUCLEOTIDE SEQUENCE [LARGE SCALE GENOMIC DNA]</scope>
    <source>
        <strain>RQ2</strain>
    </source>
</reference>